<keyword id="KW-0040">ANK repeat</keyword>
<keyword id="KW-1185">Reference proteome</keyword>
<keyword id="KW-0677">Repeat</keyword>
<evidence type="ECO:0000305" key="1"/>
<accession>Q9J5G9</accession>
<accession>O90757</accession>
<protein>
    <recommendedName>
        <fullName>Putative ankyrin repeat protein FPV034</fullName>
    </recommendedName>
</protein>
<name>V034_FOWPN</name>
<gene>
    <name type="primary">ANK2</name>
    <name type="ordered locus">FPV034</name>
</gene>
<proteinExistence type="predicted"/>
<organism>
    <name type="scientific">Fowlpox virus (strain NVSL)</name>
    <name type="common">FPV</name>
    <dbReference type="NCBI Taxonomy" id="928301"/>
    <lineage>
        <taxon>Viruses</taxon>
        <taxon>Varidnaviria</taxon>
        <taxon>Bamfordvirae</taxon>
        <taxon>Nucleocytoviricota</taxon>
        <taxon>Pokkesviricetes</taxon>
        <taxon>Chitovirales</taxon>
        <taxon>Poxviridae</taxon>
        <taxon>Chordopoxvirinae</taxon>
        <taxon>Avipoxvirus</taxon>
        <taxon>Fowlpox virus</taxon>
    </lineage>
</organism>
<organismHost>
    <name type="scientific">Vertebrata</name>
    <dbReference type="NCBI Taxonomy" id="7742"/>
</organismHost>
<feature type="chain" id="PRO_0000067110" description="Putative ankyrin repeat protein FPV034">
    <location>
        <begin position="1"/>
        <end position="415"/>
    </location>
</feature>
<feature type="repeat" description="ANK 1">
    <location>
        <begin position="12"/>
        <end position="41"/>
    </location>
</feature>
<feature type="repeat" description="ANK 2">
    <location>
        <begin position="43"/>
        <end position="72"/>
    </location>
</feature>
<feature type="repeat" description="ANK 3">
    <location>
        <begin position="76"/>
        <end position="105"/>
    </location>
</feature>
<feature type="repeat" description="ANK 4">
    <location>
        <begin position="107"/>
        <end position="135"/>
    </location>
</feature>
<feature type="repeat" description="ANK 5">
    <location>
        <begin position="139"/>
        <end position="168"/>
    </location>
</feature>
<feature type="repeat" description="ANK 6">
    <location>
        <begin position="170"/>
        <end position="200"/>
    </location>
</feature>
<feature type="repeat" description="ANK 7">
    <location>
        <begin position="203"/>
        <end position="232"/>
    </location>
</feature>
<feature type="repeat" description="ANK 8">
    <location>
        <begin position="237"/>
        <end position="266"/>
    </location>
</feature>
<feature type="repeat" description="ANK 9">
    <location>
        <begin position="270"/>
        <end position="299"/>
    </location>
</feature>
<feature type="repeat" description="ANK 10">
    <location>
        <begin position="303"/>
        <end position="332"/>
    </location>
</feature>
<feature type="sequence conflict" description="In Ref. 1; CAA07010." evidence="1" ref="1">
    <original>KRYNYNNTLIQ</original>
    <variation>TL</variation>
    <location>
        <begin position="405"/>
        <end position="415"/>
    </location>
</feature>
<sequence length="415" mass="47719">MKTKMFGLHEPICIKLLEQAIELKDYIVVRMILNQQENINTYKHFNMLRKAVLNHDHNLVNIFIDKNFNINIADSVGYTLLRYAVEVDDVNIAKILLDAGSIINKNDYRLLHSAITHENKKMIELLCLHGININVKDDKGYTALYYTICNNNYDMVCFLLEKNADISIVNKYSMLHFLSTSNKYHNVMAVLLDKGIDVNIINHVKAPIHVAVERNNIYGTMLLINRNADVNIKELHGGRTSLHLAIKERNYEAAFVLINNGANVDSFDDVGNTPIFIAASLQDVRFMKLLLDNGADINVRNVFGETPVNMVITGGSKEVTQYTVSYLISLKVDNIVLNDFCAYKQNMNLIHRINYGSPRLFMEYIGDIYEWHLPYSVLTDDKPINYSKIQSKVSHNESRFLPYKKRYNYNNTLIQ</sequence>
<reference key="1">
    <citation type="journal article" date="1998" name="J. Virol.">
        <title>Fowlpox virus encodes nonessential homologs of cellular alpha-SNAP, PC-1, and an orphan human homolog of a secreted nematode protein.</title>
        <authorList>
            <person name="Laidlaw S.M."/>
            <person name="Anwar M.A."/>
            <person name="Thomas W."/>
            <person name="Green P."/>
            <person name="Shaw K."/>
            <person name="Skinner M.A."/>
        </authorList>
    </citation>
    <scope>NUCLEOTIDE SEQUENCE [GENOMIC DNA]</scope>
    <source>
        <strain>FP-9 / Isolate HP-438</strain>
    </source>
</reference>
<reference key="2">
    <citation type="journal article" date="2000" name="J. Virol.">
        <title>The genome of fowlpox virus.</title>
        <authorList>
            <person name="Afonso C.L."/>
            <person name="Tulman E.R."/>
            <person name="Lu Z."/>
            <person name="Zsak L."/>
            <person name="Kutish G.F."/>
            <person name="Rock D.L."/>
        </authorList>
    </citation>
    <scope>NUCLEOTIDE SEQUENCE [LARGE SCALE GENOMIC DNA]</scope>
</reference>
<dbReference type="EMBL" id="AJ006408">
    <property type="protein sequence ID" value="CAA07010.1"/>
    <property type="molecule type" value="Genomic_DNA"/>
</dbReference>
<dbReference type="EMBL" id="AF198100">
    <property type="protein sequence ID" value="AAF44378.1"/>
    <property type="molecule type" value="Genomic_DNA"/>
</dbReference>
<dbReference type="RefSeq" id="NP_038997.1">
    <property type="nucleotide sequence ID" value="NC_002188.1"/>
</dbReference>
<dbReference type="SMR" id="Q9J5G9"/>
<dbReference type="GeneID" id="1486582"/>
<dbReference type="KEGG" id="vg:1486582"/>
<dbReference type="Proteomes" id="UP000008597">
    <property type="component" value="Segment"/>
</dbReference>
<dbReference type="Gene3D" id="1.25.40.20">
    <property type="entry name" value="Ankyrin repeat-containing domain"/>
    <property type="match status" value="3"/>
</dbReference>
<dbReference type="InterPro" id="IPR002110">
    <property type="entry name" value="Ankyrin_rpt"/>
</dbReference>
<dbReference type="InterPro" id="IPR036770">
    <property type="entry name" value="Ankyrin_rpt-contain_sf"/>
</dbReference>
<dbReference type="PANTHER" id="PTHR24198">
    <property type="entry name" value="ANKYRIN REPEAT AND PROTEIN KINASE DOMAIN-CONTAINING PROTEIN"/>
    <property type="match status" value="1"/>
</dbReference>
<dbReference type="PANTHER" id="PTHR24198:SF165">
    <property type="entry name" value="ANKYRIN REPEAT-CONTAINING PROTEIN-RELATED"/>
    <property type="match status" value="1"/>
</dbReference>
<dbReference type="Pfam" id="PF12796">
    <property type="entry name" value="Ank_2"/>
    <property type="match status" value="2"/>
</dbReference>
<dbReference type="PRINTS" id="PR01415">
    <property type="entry name" value="ANKYRIN"/>
</dbReference>
<dbReference type="SMART" id="SM00248">
    <property type="entry name" value="ANK"/>
    <property type="match status" value="9"/>
</dbReference>
<dbReference type="SUPFAM" id="SSF48403">
    <property type="entry name" value="Ankyrin repeat"/>
    <property type="match status" value="1"/>
</dbReference>
<dbReference type="PROSITE" id="PS50297">
    <property type="entry name" value="ANK_REP_REGION"/>
    <property type="match status" value="1"/>
</dbReference>
<dbReference type="PROSITE" id="PS50088">
    <property type="entry name" value="ANK_REPEAT"/>
    <property type="match status" value="7"/>
</dbReference>